<proteinExistence type="inferred from homology"/>
<keyword id="KW-0963">Cytoplasm</keyword>
<keyword id="KW-0489">Methyltransferase</keyword>
<keyword id="KW-0698">rRNA processing</keyword>
<keyword id="KW-0949">S-adenosyl-L-methionine</keyword>
<keyword id="KW-0808">Transferase</keyword>
<dbReference type="EC" id="2.1.1.177" evidence="1"/>
<dbReference type="EMBL" id="BA000017">
    <property type="protein sequence ID" value="BAB56186.1"/>
    <property type="molecule type" value="Genomic_DNA"/>
</dbReference>
<dbReference type="RefSeq" id="WP_000704775.1">
    <property type="nucleotide sequence ID" value="NC_002758.2"/>
</dbReference>
<dbReference type="SMR" id="P0A0N6"/>
<dbReference type="GeneID" id="98344407"/>
<dbReference type="KEGG" id="sav:SAV0024"/>
<dbReference type="HOGENOM" id="CLU_100552_0_0_9"/>
<dbReference type="PhylomeDB" id="P0A0N6"/>
<dbReference type="Proteomes" id="UP000002481">
    <property type="component" value="Chromosome"/>
</dbReference>
<dbReference type="GO" id="GO:0005737">
    <property type="term" value="C:cytoplasm"/>
    <property type="evidence" value="ECO:0007669"/>
    <property type="project" value="UniProtKB-SubCell"/>
</dbReference>
<dbReference type="GO" id="GO:0070038">
    <property type="term" value="F:rRNA (pseudouridine-N3-)-methyltransferase activity"/>
    <property type="evidence" value="ECO:0007669"/>
    <property type="project" value="UniProtKB-UniRule"/>
</dbReference>
<dbReference type="CDD" id="cd18081">
    <property type="entry name" value="RlmH-like"/>
    <property type="match status" value="1"/>
</dbReference>
<dbReference type="Gene3D" id="3.40.1280.10">
    <property type="match status" value="1"/>
</dbReference>
<dbReference type="HAMAP" id="MF_00658">
    <property type="entry name" value="23SrRNA_methyltr_H"/>
    <property type="match status" value="1"/>
</dbReference>
<dbReference type="InterPro" id="IPR029028">
    <property type="entry name" value="Alpha/beta_knot_MTases"/>
</dbReference>
<dbReference type="InterPro" id="IPR003742">
    <property type="entry name" value="RlmH-like"/>
</dbReference>
<dbReference type="InterPro" id="IPR029026">
    <property type="entry name" value="tRNA_m1G_MTases_N"/>
</dbReference>
<dbReference type="NCBIfam" id="NF000985">
    <property type="entry name" value="PRK00103.1-3"/>
    <property type="match status" value="1"/>
</dbReference>
<dbReference type="NCBIfam" id="NF000986">
    <property type="entry name" value="PRK00103.1-4"/>
    <property type="match status" value="1"/>
</dbReference>
<dbReference type="NCBIfam" id="TIGR00246">
    <property type="entry name" value="tRNA_RlmH_YbeA"/>
    <property type="match status" value="1"/>
</dbReference>
<dbReference type="PANTHER" id="PTHR33603">
    <property type="entry name" value="METHYLTRANSFERASE"/>
    <property type="match status" value="1"/>
</dbReference>
<dbReference type="PANTHER" id="PTHR33603:SF1">
    <property type="entry name" value="RIBOSOMAL RNA LARGE SUBUNIT METHYLTRANSFERASE H"/>
    <property type="match status" value="1"/>
</dbReference>
<dbReference type="Pfam" id="PF02590">
    <property type="entry name" value="SPOUT_MTase"/>
    <property type="match status" value="1"/>
</dbReference>
<dbReference type="PIRSF" id="PIRSF004505">
    <property type="entry name" value="MT_bac"/>
    <property type="match status" value="1"/>
</dbReference>
<dbReference type="SUPFAM" id="SSF75217">
    <property type="entry name" value="alpha/beta knot"/>
    <property type="match status" value="1"/>
</dbReference>
<protein>
    <recommendedName>
        <fullName evidence="1">Ribosomal RNA large subunit methyltransferase H</fullName>
        <ecNumber evidence="1">2.1.1.177</ecNumber>
    </recommendedName>
    <alternativeName>
        <fullName evidence="1">23S rRNA (pseudouridine1915-N3)-methyltransferase</fullName>
    </alternativeName>
    <alternativeName>
        <fullName evidence="1">23S rRNA m3Psi1915 methyltransferase</fullName>
    </alternativeName>
    <alternativeName>
        <fullName evidence="1">rRNA (pseudouridine-N3-)-methyltransferase RlmH</fullName>
    </alternativeName>
</protein>
<accession>P0A0N6</accession>
<accession>Q9WVW7</accession>
<gene>
    <name evidence="1" type="primary">rlmH</name>
    <name type="ordered locus">SAV0024</name>
</gene>
<sequence length="159" mass="18306">MKITILAVGKLKEKYWKQAIAEYEKRLGPYTKIDIIEVPDEKAPENMSDKEIEQVKEKEGQRILAKIKPQSTVITLEIQGKMLSSEGLAQELNQRMTQGQSDFVFVIGGSNGLHKDVLQRSNYALSFSKMTFPHQMMRVVLIEQVYRAFKIMRGEAYHK</sequence>
<comment type="function">
    <text evidence="1">Specifically methylates the pseudouridine at position 1915 (m3Psi1915) in 23S rRNA.</text>
</comment>
<comment type="catalytic activity">
    <reaction evidence="1">
        <text>pseudouridine(1915) in 23S rRNA + S-adenosyl-L-methionine = N(3)-methylpseudouridine(1915) in 23S rRNA + S-adenosyl-L-homocysteine + H(+)</text>
        <dbReference type="Rhea" id="RHEA:42752"/>
        <dbReference type="Rhea" id="RHEA-COMP:10221"/>
        <dbReference type="Rhea" id="RHEA-COMP:10222"/>
        <dbReference type="ChEBI" id="CHEBI:15378"/>
        <dbReference type="ChEBI" id="CHEBI:57856"/>
        <dbReference type="ChEBI" id="CHEBI:59789"/>
        <dbReference type="ChEBI" id="CHEBI:65314"/>
        <dbReference type="ChEBI" id="CHEBI:74486"/>
        <dbReference type="EC" id="2.1.1.177"/>
    </reaction>
</comment>
<comment type="subunit">
    <text evidence="1">Homodimer.</text>
</comment>
<comment type="subcellular location">
    <subcellularLocation>
        <location evidence="1">Cytoplasm</location>
    </subcellularLocation>
</comment>
<comment type="similarity">
    <text evidence="1">Belongs to the RNA methyltransferase RlmH family.</text>
</comment>
<evidence type="ECO:0000255" key="1">
    <source>
        <dbReference type="HAMAP-Rule" id="MF_00658"/>
    </source>
</evidence>
<feature type="chain" id="PRO_0000198177" description="Ribosomal RNA large subunit methyltransferase H">
    <location>
        <begin position="1"/>
        <end position="159"/>
    </location>
</feature>
<feature type="binding site" evidence="1">
    <location>
        <position position="76"/>
    </location>
    <ligand>
        <name>S-adenosyl-L-methionine</name>
        <dbReference type="ChEBI" id="CHEBI:59789"/>
    </ligand>
</feature>
<feature type="binding site" evidence="1">
    <location>
        <position position="108"/>
    </location>
    <ligand>
        <name>S-adenosyl-L-methionine</name>
        <dbReference type="ChEBI" id="CHEBI:59789"/>
    </ligand>
</feature>
<feature type="binding site" evidence="1">
    <location>
        <begin position="127"/>
        <end position="132"/>
    </location>
    <ligand>
        <name>S-adenosyl-L-methionine</name>
        <dbReference type="ChEBI" id="CHEBI:59789"/>
    </ligand>
</feature>
<name>RLMH_STAAM</name>
<organism>
    <name type="scientific">Staphylococcus aureus (strain Mu50 / ATCC 700699)</name>
    <dbReference type="NCBI Taxonomy" id="158878"/>
    <lineage>
        <taxon>Bacteria</taxon>
        <taxon>Bacillati</taxon>
        <taxon>Bacillota</taxon>
        <taxon>Bacilli</taxon>
        <taxon>Bacillales</taxon>
        <taxon>Staphylococcaceae</taxon>
        <taxon>Staphylococcus</taxon>
    </lineage>
</organism>
<reference key="1">
    <citation type="journal article" date="2001" name="Lancet">
        <title>Whole genome sequencing of meticillin-resistant Staphylococcus aureus.</title>
        <authorList>
            <person name="Kuroda M."/>
            <person name="Ohta T."/>
            <person name="Uchiyama I."/>
            <person name="Baba T."/>
            <person name="Yuzawa H."/>
            <person name="Kobayashi I."/>
            <person name="Cui L."/>
            <person name="Oguchi A."/>
            <person name="Aoki K."/>
            <person name="Nagai Y."/>
            <person name="Lian J.-Q."/>
            <person name="Ito T."/>
            <person name="Kanamori M."/>
            <person name="Matsumaru H."/>
            <person name="Maruyama A."/>
            <person name="Murakami H."/>
            <person name="Hosoyama A."/>
            <person name="Mizutani-Ui Y."/>
            <person name="Takahashi N.K."/>
            <person name="Sawano T."/>
            <person name="Inoue R."/>
            <person name="Kaito C."/>
            <person name="Sekimizu K."/>
            <person name="Hirakawa H."/>
            <person name="Kuhara S."/>
            <person name="Goto S."/>
            <person name="Yabuzaki J."/>
            <person name="Kanehisa M."/>
            <person name="Yamashita A."/>
            <person name="Oshima K."/>
            <person name="Furuya K."/>
            <person name="Yoshino C."/>
            <person name="Shiba T."/>
            <person name="Hattori M."/>
            <person name="Ogasawara N."/>
            <person name="Hayashi H."/>
            <person name="Hiramatsu K."/>
        </authorList>
    </citation>
    <scope>NUCLEOTIDE SEQUENCE [LARGE SCALE GENOMIC DNA]</scope>
    <source>
        <strain>Mu50 / ATCC 700699</strain>
    </source>
</reference>